<proteinExistence type="inferred from homology"/>
<sequence length="492" mass="54178">MKKLKITGLSLIISGLLMAQAQAAEPVYPDQLRLFSLGQEVCGDKYRPVNREEAQSIKSNIVGMMGQWQISGLANGWVIMGPGYNGEIKPGSASSTWCYPTNPATGEIPTLSALDIPDGDEVDVQWRLVHDSANFIKPTSYLAHYLGYAWVGGNHSQYVGEDMDVTRDGDGWVIRGNNDGGCDGYRCGDKTSIKVSNFAYNLDPDSFKHGDVTQSDRQLVKTVVGWAINDSDTPQSGYDVTLRYDTATNWSKTNTYGLSEKVTTKNKFKWPLVGETELSIEIAANQSWASQNGGSTTTSLSQSVRPTVPAHSKIPVKIELYKADISYPYEFKADVSYDLTLSGFLRWGGNAWYTHPDNRPNWNHTFVIGPYKDKASSIRYQWDKRYIPGEVKWWDWNWTIQQNGLPTMQNNLAKVLRPVRAGITGDFSAESQFAGNIEIGAPVPVAAASHSSRARNLSAGQGLRLEIPLDAQELSGLGFNNVSLSVTPAANQ</sequence>
<name>AER4_AERHY</name>
<comment type="function">
    <text evidence="3">Secreted, cytolytic toxin that forms pores in host membranes after proteolytic removal of a C-terminal propeptide, leading to destruction of the membrane permeability barrier and cell death. The pores are formed by transmembrane beta-strands and are approximately 3 nm in diameter.</text>
</comment>
<comment type="subunit">
    <text evidence="1">Homodimer in solution; homoheptamer in the host membrane. After binding to GPI-anchored proteins in target membranes and proteolytic removal of the C-terminal propeptide, the protein assembles into a heptameric pre-pore complex. A further conformation change leads to insertion into the host membrane (By similarity).</text>
</comment>
<comment type="subcellular location">
    <subcellularLocation>
        <location evidence="3">Secreted</location>
    </subcellularLocation>
    <subcellularLocation>
        <location evidence="3">Host cell membrane</location>
    </subcellularLocation>
    <text>Secreted as a soluble precursor.</text>
</comment>
<comment type="domain">
    <text evidence="1">The C-terminal propeptide is required for normal protein folding and secretion; it maintains the aerolysin precursor in its soluble form and prevents premature heptamerization and pore formation.</text>
</comment>
<comment type="PTM">
    <text evidence="1">Proteolytic cleavage and subsequent release of the propeptide trigger a major conformation change, leading to the formation of a heptameric pre-pore that then inserts into the host membrane.</text>
</comment>
<comment type="similarity">
    <text evidence="4">Belongs to the aerolysin family.</text>
</comment>
<keyword id="KW-0204">Cytolysis</keyword>
<keyword id="KW-1015">Disulfide bond</keyword>
<keyword id="KW-0354">Hemolysis</keyword>
<keyword id="KW-1032">Host cell membrane</keyword>
<keyword id="KW-1043">Host membrane</keyword>
<keyword id="KW-0472">Membrane</keyword>
<keyword id="KW-0964">Secreted</keyword>
<keyword id="KW-0732">Signal</keyword>
<keyword id="KW-0800">Toxin</keyword>
<keyword id="KW-0812">Transmembrane</keyword>
<keyword id="KW-1134">Transmembrane beta strand</keyword>
<keyword id="KW-0843">Virulence</keyword>
<reference key="1">
    <citation type="journal article" date="1992" name="Microb. Pathog.">
        <title>Nucleotide sequences and characterization of haemolysin genes from Aeromonas hydrophila and Aeromonas sobria.</title>
        <authorList>
            <person name="Hirono I."/>
            <person name="Aoki T."/>
            <person name="Asao T."/>
            <person name="Kozaki S."/>
        </authorList>
    </citation>
    <scope>NUCLEOTIDE SEQUENCE [GENOMIC DNA]</scope>
    <scope>FUNCTION</scope>
    <scope>SUBCELLULAR LOCATION</scope>
    <source>
        <strain>28SA</strain>
    </source>
</reference>
<evidence type="ECO:0000250" key="1"/>
<evidence type="ECO:0000255" key="2"/>
<evidence type="ECO:0000269" key="3">
    <source>
    </source>
</evidence>
<evidence type="ECO:0000305" key="4"/>
<organism>
    <name type="scientific">Aeromonas hydrophila</name>
    <dbReference type="NCBI Taxonomy" id="644"/>
    <lineage>
        <taxon>Bacteria</taxon>
        <taxon>Pseudomonadati</taxon>
        <taxon>Pseudomonadota</taxon>
        <taxon>Gammaproteobacteria</taxon>
        <taxon>Aeromonadales</taxon>
        <taxon>Aeromonadaceae</taxon>
        <taxon>Aeromonas</taxon>
    </lineage>
</organism>
<accession>Q06303</accession>
<gene>
    <name type="primary">ahh4</name>
</gene>
<dbReference type="EMBL" id="X65043">
    <property type="protein sequence ID" value="CAA46179.1"/>
    <property type="molecule type" value="Genomic_DNA"/>
</dbReference>
<dbReference type="PIR" id="I39591">
    <property type="entry name" value="I39591"/>
</dbReference>
<dbReference type="SMR" id="Q06303"/>
<dbReference type="GO" id="GO:0005576">
    <property type="term" value="C:extracellular region"/>
    <property type="evidence" value="ECO:0007669"/>
    <property type="project" value="UniProtKB-SubCell"/>
</dbReference>
<dbReference type="GO" id="GO:0020002">
    <property type="term" value="C:host cell plasma membrane"/>
    <property type="evidence" value="ECO:0007669"/>
    <property type="project" value="UniProtKB-SubCell"/>
</dbReference>
<dbReference type="GO" id="GO:0016020">
    <property type="term" value="C:membrane"/>
    <property type="evidence" value="ECO:0007669"/>
    <property type="project" value="UniProtKB-KW"/>
</dbReference>
<dbReference type="GO" id="GO:0090729">
    <property type="term" value="F:toxin activity"/>
    <property type="evidence" value="ECO:0007669"/>
    <property type="project" value="UniProtKB-KW"/>
</dbReference>
<dbReference type="GO" id="GO:0031640">
    <property type="term" value="P:killing of cells of another organism"/>
    <property type="evidence" value="ECO:0007669"/>
    <property type="project" value="UniProtKB-KW"/>
</dbReference>
<dbReference type="CDD" id="cd20218">
    <property type="entry name" value="PFM_aerolysin"/>
    <property type="match status" value="1"/>
</dbReference>
<dbReference type="Gene3D" id="3.10.40.10">
    <property type="entry name" value="Aerolysin/Pertussis toxin (APT), N-terminal domain"/>
    <property type="match status" value="1"/>
</dbReference>
<dbReference type="Gene3D" id="3.30.412.10">
    <property type="entry name" value="Proaerolysin, chain A, domain 2"/>
    <property type="match status" value="1"/>
</dbReference>
<dbReference type="Gene3D" id="2.170.15.10">
    <property type="entry name" value="Proaerolysin, chain A, domain 3"/>
    <property type="match status" value="1"/>
</dbReference>
<dbReference type="InterPro" id="IPR055267">
    <property type="entry name" value="Aerolysin-like_C"/>
</dbReference>
<dbReference type="InterPro" id="IPR005831">
    <property type="entry name" value="Aerolysin/haemolysin_CS"/>
</dbReference>
<dbReference type="InterPro" id="IPR005830">
    <property type="entry name" value="Aerolysn"/>
</dbReference>
<dbReference type="InterPro" id="IPR005138">
    <property type="entry name" value="APT_dom"/>
</dbReference>
<dbReference type="InterPro" id="IPR037015">
    <property type="entry name" value="APT_N_sf"/>
</dbReference>
<dbReference type="InterPro" id="IPR016187">
    <property type="entry name" value="CTDL_fold"/>
</dbReference>
<dbReference type="Pfam" id="PF01117">
    <property type="entry name" value="Aerolysin"/>
    <property type="match status" value="1"/>
</dbReference>
<dbReference type="Pfam" id="PF03440">
    <property type="entry name" value="APT"/>
    <property type="match status" value="1"/>
</dbReference>
<dbReference type="PRINTS" id="PR00754">
    <property type="entry name" value="AEROLYSIN"/>
</dbReference>
<dbReference type="SMART" id="SM00999">
    <property type="entry name" value="Aerolysin"/>
    <property type="match status" value="1"/>
</dbReference>
<dbReference type="SUPFAM" id="SSF56973">
    <property type="entry name" value="Aerolisin/ETX pore-forming domain"/>
    <property type="match status" value="1"/>
</dbReference>
<dbReference type="SUPFAM" id="SSF56436">
    <property type="entry name" value="C-type lectin-like"/>
    <property type="match status" value="1"/>
</dbReference>
<dbReference type="PROSITE" id="PS00274">
    <property type="entry name" value="AEROLYSIN"/>
    <property type="match status" value="1"/>
</dbReference>
<protein>
    <recommendedName>
        <fullName>Aerolysin-4</fullName>
    </recommendedName>
    <alternativeName>
        <fullName>Hemolysin-4</fullName>
    </alternativeName>
</protein>
<feature type="signal peptide" evidence="2">
    <location>
        <begin position="1"/>
        <end position="23"/>
    </location>
</feature>
<feature type="chain" id="PRO_0000035624" description="Aerolysin-4">
    <location>
        <begin position="24"/>
        <end position="445"/>
    </location>
</feature>
<feature type="propeptide" id="PRO_0000035625" evidence="1">
    <location>
        <begin position="446"/>
        <end position="492"/>
    </location>
</feature>
<feature type="region of interest" description="Interaction with host N-linked glycan" evidence="1">
    <location>
        <begin position="68"/>
        <end position="84"/>
    </location>
</feature>
<feature type="region of interest" description="Part of the transmembrane beta-barrel after proteolytic activation of the toxin and insertion into the host membrane" evidence="1">
    <location>
        <begin position="256"/>
        <end position="288"/>
    </location>
</feature>
<feature type="region of interest" description="Interaction with glycans from host GPI-anchor" evidence="1">
    <location>
        <begin position="346"/>
        <end position="355"/>
    </location>
</feature>
<feature type="site" description="Important for oligomerization" evidence="1">
    <location>
        <position position="155"/>
    </location>
</feature>
<feature type="site" description="Important for heptamerization" evidence="1">
    <location>
        <position position="374"/>
    </location>
</feature>
<feature type="site" description="Important for heptamerization" evidence="1">
    <location>
        <position position="390"/>
    </location>
</feature>
<feature type="disulfide bond" evidence="1">
    <location>
        <begin position="42"/>
        <end position="98"/>
    </location>
</feature>
<feature type="disulfide bond" evidence="1">
    <location>
        <begin position="182"/>
        <end position="187"/>
    </location>
</feature>